<name>GATA_RICCK</name>
<keyword id="KW-0067">ATP-binding</keyword>
<keyword id="KW-0436">Ligase</keyword>
<keyword id="KW-0547">Nucleotide-binding</keyword>
<keyword id="KW-0648">Protein biosynthesis</keyword>
<organism>
    <name type="scientific">Rickettsia canadensis (strain McKiel)</name>
    <dbReference type="NCBI Taxonomy" id="293613"/>
    <lineage>
        <taxon>Bacteria</taxon>
        <taxon>Pseudomonadati</taxon>
        <taxon>Pseudomonadota</taxon>
        <taxon>Alphaproteobacteria</taxon>
        <taxon>Rickettsiales</taxon>
        <taxon>Rickettsiaceae</taxon>
        <taxon>Rickettsieae</taxon>
        <taxon>Rickettsia</taxon>
        <taxon>belli group</taxon>
    </lineage>
</organism>
<proteinExistence type="inferred from homology"/>
<comment type="function">
    <text evidence="1">Allows the formation of correctly charged Gln-tRNA(Gln) through the transamidation of misacylated Glu-tRNA(Gln) in organisms which lack glutaminyl-tRNA synthetase. The reaction takes place in the presence of glutamine and ATP through an activated gamma-phospho-Glu-tRNA(Gln).</text>
</comment>
<comment type="catalytic activity">
    <reaction evidence="1">
        <text>L-glutamyl-tRNA(Gln) + L-glutamine + ATP + H2O = L-glutaminyl-tRNA(Gln) + L-glutamate + ADP + phosphate + H(+)</text>
        <dbReference type="Rhea" id="RHEA:17521"/>
        <dbReference type="Rhea" id="RHEA-COMP:9681"/>
        <dbReference type="Rhea" id="RHEA-COMP:9684"/>
        <dbReference type="ChEBI" id="CHEBI:15377"/>
        <dbReference type="ChEBI" id="CHEBI:15378"/>
        <dbReference type="ChEBI" id="CHEBI:29985"/>
        <dbReference type="ChEBI" id="CHEBI:30616"/>
        <dbReference type="ChEBI" id="CHEBI:43474"/>
        <dbReference type="ChEBI" id="CHEBI:58359"/>
        <dbReference type="ChEBI" id="CHEBI:78520"/>
        <dbReference type="ChEBI" id="CHEBI:78521"/>
        <dbReference type="ChEBI" id="CHEBI:456216"/>
        <dbReference type="EC" id="6.3.5.7"/>
    </reaction>
</comment>
<comment type="subunit">
    <text evidence="1">Heterotrimer of A, B and C subunits.</text>
</comment>
<comment type="similarity">
    <text evidence="1">Belongs to the amidase family. GatA subfamily.</text>
</comment>
<reference key="1">
    <citation type="submission" date="2007-09" db="EMBL/GenBank/DDBJ databases">
        <title>Complete genome sequence of Rickettsia canadensis.</title>
        <authorList>
            <person name="Madan A."/>
            <person name="Fahey J."/>
            <person name="Helton E."/>
            <person name="Ketteman M."/>
            <person name="Madan A."/>
            <person name="Rodrigues S."/>
            <person name="Sanchez A."/>
            <person name="Whiting M."/>
            <person name="Dasch G."/>
            <person name="Eremeeva M."/>
        </authorList>
    </citation>
    <scope>NUCLEOTIDE SEQUENCE [LARGE SCALE GENOMIC DNA]</scope>
    <source>
        <strain>McKiel</strain>
    </source>
</reference>
<feature type="chain" id="PRO_1000015899" description="Glutamyl-tRNA(Gln) amidotransferase subunit A">
    <location>
        <begin position="1"/>
        <end position="493"/>
    </location>
</feature>
<feature type="active site" description="Charge relay system" evidence="1">
    <location>
        <position position="78"/>
    </location>
</feature>
<feature type="active site" description="Charge relay system" evidence="1">
    <location>
        <position position="158"/>
    </location>
</feature>
<feature type="active site" description="Acyl-ester intermediate" evidence="1">
    <location>
        <position position="182"/>
    </location>
</feature>
<protein>
    <recommendedName>
        <fullName evidence="1">Glutamyl-tRNA(Gln) amidotransferase subunit A</fullName>
        <shortName evidence="1">Glu-ADT subunit A</shortName>
        <ecNumber evidence="1">6.3.5.7</ecNumber>
    </recommendedName>
</protein>
<gene>
    <name evidence="1" type="primary">gatA</name>
    <name type="ordered locus">A1E_00780</name>
</gene>
<accession>A8EXM1</accession>
<sequence>MTELNKLTLADSIKGLKNKDFTSTELVNAHIQQIEKHKNLNAYVTKTFDLALKGAQIADQNYAQNKARTLEGIPFAAKDLFCTKGIRTTACSNILKNFIPNYESSVTQNIFNNGGVMLGKTNMDEFAMGAANITSCFGNVINPWKANNDNSDLVPGGSSGGSAASVSGFMASAALGSDTGGSVRQPASFTGLVGFKPTYGRCSRYGMVSFASSLDQAGIFTRSVLDSAIMLEAMMGFDEKDSTSLKAEVPQLQSAIGSSVKNMKIGVPLSLGEGSIIEPDVMKMWQDTIELLKNAGTEIVDITLPYAKYGVAVYYVIAPAEASSNLSRYDGVRYGLRVERENMTLDEMYEMTRSAGFGEEVKRRIMIGTYVLSSSCMDAYYLKAQKVRSLVANDFNNAFTKVDTILLPAAPSEAFKIGEKQNDPTIMYLNDLFTIPASLAGLPCVSVPAGLSARGLPLGMQIIGKQLDEYNVLKVASTIESGVKHIKFEPKGF</sequence>
<evidence type="ECO:0000255" key="1">
    <source>
        <dbReference type="HAMAP-Rule" id="MF_00120"/>
    </source>
</evidence>
<dbReference type="EC" id="6.3.5.7" evidence="1"/>
<dbReference type="EMBL" id="CP000409">
    <property type="protein sequence ID" value="ABV73104.1"/>
    <property type="molecule type" value="Genomic_DNA"/>
</dbReference>
<dbReference type="RefSeq" id="WP_012148305.1">
    <property type="nucleotide sequence ID" value="NC_009879.1"/>
</dbReference>
<dbReference type="SMR" id="A8EXM1"/>
<dbReference type="STRING" id="293613.A1E_00780"/>
<dbReference type="KEGG" id="rcm:A1E_00780"/>
<dbReference type="eggNOG" id="COG0154">
    <property type="taxonomic scope" value="Bacteria"/>
</dbReference>
<dbReference type="HOGENOM" id="CLU_009600_0_3_5"/>
<dbReference type="Proteomes" id="UP000007056">
    <property type="component" value="Chromosome"/>
</dbReference>
<dbReference type="GO" id="GO:0030956">
    <property type="term" value="C:glutamyl-tRNA(Gln) amidotransferase complex"/>
    <property type="evidence" value="ECO:0007669"/>
    <property type="project" value="InterPro"/>
</dbReference>
<dbReference type="GO" id="GO:0005524">
    <property type="term" value="F:ATP binding"/>
    <property type="evidence" value="ECO:0007669"/>
    <property type="project" value="UniProtKB-KW"/>
</dbReference>
<dbReference type="GO" id="GO:0050567">
    <property type="term" value="F:glutaminyl-tRNA synthase (glutamine-hydrolyzing) activity"/>
    <property type="evidence" value="ECO:0007669"/>
    <property type="project" value="UniProtKB-UniRule"/>
</dbReference>
<dbReference type="GO" id="GO:0006412">
    <property type="term" value="P:translation"/>
    <property type="evidence" value="ECO:0007669"/>
    <property type="project" value="UniProtKB-UniRule"/>
</dbReference>
<dbReference type="Gene3D" id="3.90.1300.10">
    <property type="entry name" value="Amidase signature (AS) domain"/>
    <property type="match status" value="1"/>
</dbReference>
<dbReference type="HAMAP" id="MF_00120">
    <property type="entry name" value="GatA"/>
    <property type="match status" value="1"/>
</dbReference>
<dbReference type="InterPro" id="IPR000120">
    <property type="entry name" value="Amidase"/>
</dbReference>
<dbReference type="InterPro" id="IPR020556">
    <property type="entry name" value="Amidase_CS"/>
</dbReference>
<dbReference type="InterPro" id="IPR023631">
    <property type="entry name" value="Amidase_dom"/>
</dbReference>
<dbReference type="InterPro" id="IPR036928">
    <property type="entry name" value="AS_sf"/>
</dbReference>
<dbReference type="InterPro" id="IPR004412">
    <property type="entry name" value="GatA"/>
</dbReference>
<dbReference type="NCBIfam" id="TIGR00132">
    <property type="entry name" value="gatA"/>
    <property type="match status" value="1"/>
</dbReference>
<dbReference type="PANTHER" id="PTHR11895:SF151">
    <property type="entry name" value="GLUTAMYL-TRNA(GLN) AMIDOTRANSFERASE SUBUNIT A"/>
    <property type="match status" value="1"/>
</dbReference>
<dbReference type="PANTHER" id="PTHR11895">
    <property type="entry name" value="TRANSAMIDASE"/>
    <property type="match status" value="1"/>
</dbReference>
<dbReference type="Pfam" id="PF01425">
    <property type="entry name" value="Amidase"/>
    <property type="match status" value="1"/>
</dbReference>
<dbReference type="SUPFAM" id="SSF75304">
    <property type="entry name" value="Amidase signature (AS) enzymes"/>
    <property type="match status" value="1"/>
</dbReference>
<dbReference type="PROSITE" id="PS00571">
    <property type="entry name" value="AMIDASES"/>
    <property type="match status" value="1"/>
</dbReference>